<name>ZNUC_PSYA2</name>
<dbReference type="EC" id="7.2.2.20" evidence="1"/>
<dbReference type="EMBL" id="CP000082">
    <property type="protein sequence ID" value="AAZ19881.1"/>
    <property type="molecule type" value="Genomic_DNA"/>
</dbReference>
<dbReference type="RefSeq" id="WP_011281288.1">
    <property type="nucleotide sequence ID" value="NC_007204.1"/>
</dbReference>
<dbReference type="SMR" id="Q4FQ27"/>
<dbReference type="STRING" id="259536.Psyc_2034"/>
<dbReference type="KEGG" id="par:Psyc_2034"/>
<dbReference type="eggNOG" id="COG1121">
    <property type="taxonomic scope" value="Bacteria"/>
</dbReference>
<dbReference type="HOGENOM" id="CLU_000604_1_11_6"/>
<dbReference type="OrthoDB" id="9780942at2"/>
<dbReference type="Proteomes" id="UP000000546">
    <property type="component" value="Chromosome"/>
</dbReference>
<dbReference type="GO" id="GO:0005886">
    <property type="term" value="C:plasma membrane"/>
    <property type="evidence" value="ECO:0007669"/>
    <property type="project" value="UniProtKB-SubCell"/>
</dbReference>
<dbReference type="GO" id="GO:0015633">
    <property type="term" value="F:ABC-type zinc transporter activity"/>
    <property type="evidence" value="ECO:0007669"/>
    <property type="project" value="UniProtKB-EC"/>
</dbReference>
<dbReference type="GO" id="GO:0005524">
    <property type="term" value="F:ATP binding"/>
    <property type="evidence" value="ECO:0007669"/>
    <property type="project" value="UniProtKB-KW"/>
</dbReference>
<dbReference type="GO" id="GO:0016887">
    <property type="term" value="F:ATP hydrolysis activity"/>
    <property type="evidence" value="ECO:0007669"/>
    <property type="project" value="InterPro"/>
</dbReference>
<dbReference type="GO" id="GO:0010043">
    <property type="term" value="P:response to zinc ion"/>
    <property type="evidence" value="ECO:0007669"/>
    <property type="project" value="TreeGrafter"/>
</dbReference>
<dbReference type="Gene3D" id="3.40.50.300">
    <property type="entry name" value="P-loop containing nucleotide triphosphate hydrolases"/>
    <property type="match status" value="1"/>
</dbReference>
<dbReference type="InterPro" id="IPR003593">
    <property type="entry name" value="AAA+_ATPase"/>
</dbReference>
<dbReference type="InterPro" id="IPR003439">
    <property type="entry name" value="ABC_transporter-like_ATP-bd"/>
</dbReference>
<dbReference type="InterPro" id="IPR050153">
    <property type="entry name" value="Metal_Ion_Import_ABC"/>
</dbReference>
<dbReference type="InterPro" id="IPR027417">
    <property type="entry name" value="P-loop_NTPase"/>
</dbReference>
<dbReference type="PANTHER" id="PTHR42734">
    <property type="entry name" value="METAL TRANSPORT SYSTEM ATP-BINDING PROTEIN TM_0124-RELATED"/>
    <property type="match status" value="1"/>
</dbReference>
<dbReference type="PANTHER" id="PTHR42734:SF9">
    <property type="entry name" value="ZINC IMPORT ATP-BINDING PROTEIN ZNUC"/>
    <property type="match status" value="1"/>
</dbReference>
<dbReference type="Pfam" id="PF00005">
    <property type="entry name" value="ABC_tran"/>
    <property type="match status" value="1"/>
</dbReference>
<dbReference type="SMART" id="SM00382">
    <property type="entry name" value="AAA"/>
    <property type="match status" value="1"/>
</dbReference>
<dbReference type="SUPFAM" id="SSF52540">
    <property type="entry name" value="P-loop containing nucleoside triphosphate hydrolases"/>
    <property type="match status" value="1"/>
</dbReference>
<dbReference type="PROSITE" id="PS50893">
    <property type="entry name" value="ABC_TRANSPORTER_2"/>
    <property type="match status" value="1"/>
</dbReference>
<dbReference type="PROSITE" id="PS51298">
    <property type="entry name" value="ZNUC"/>
    <property type="match status" value="1"/>
</dbReference>
<comment type="function">
    <text evidence="1">Part of the ABC transporter complex ZnuABC involved in zinc import. Responsible for energy coupling to the transport system.</text>
</comment>
<comment type="catalytic activity">
    <reaction evidence="1">
        <text>Zn(2+)(out) + ATP(in) + H2O(in) = Zn(2+)(in) + ADP(in) + phosphate(in) + H(+)(in)</text>
        <dbReference type="Rhea" id="RHEA:29795"/>
        <dbReference type="ChEBI" id="CHEBI:15377"/>
        <dbReference type="ChEBI" id="CHEBI:15378"/>
        <dbReference type="ChEBI" id="CHEBI:29105"/>
        <dbReference type="ChEBI" id="CHEBI:30616"/>
        <dbReference type="ChEBI" id="CHEBI:43474"/>
        <dbReference type="ChEBI" id="CHEBI:456216"/>
        <dbReference type="EC" id="7.2.2.20"/>
    </reaction>
</comment>
<comment type="subunit">
    <text evidence="1">The complex is composed of two ATP-binding proteins (ZnuC), two transmembrane proteins (ZnuB) and a solute-binding protein (ZnuA).</text>
</comment>
<comment type="subcellular location">
    <subcellularLocation>
        <location evidence="1">Cell inner membrane</location>
        <topology evidence="1">Peripheral membrane protein</topology>
    </subcellularLocation>
</comment>
<comment type="similarity">
    <text evidence="1">Belongs to the ABC transporter superfamily. Zinc importer (TC 3.A.1.15.5) family.</text>
</comment>
<feature type="chain" id="PRO_0000281533" description="Zinc import ATP-binding protein ZnuC">
    <location>
        <begin position="1"/>
        <end position="243"/>
    </location>
</feature>
<feature type="domain" description="ABC transporter" evidence="1">
    <location>
        <begin position="8"/>
        <end position="225"/>
    </location>
</feature>
<feature type="binding site" evidence="1">
    <location>
        <begin position="40"/>
        <end position="47"/>
    </location>
    <ligand>
        <name>ATP</name>
        <dbReference type="ChEBI" id="CHEBI:30616"/>
    </ligand>
</feature>
<organism>
    <name type="scientific">Psychrobacter arcticus (strain DSM 17307 / VKM B-2377 / 273-4)</name>
    <dbReference type="NCBI Taxonomy" id="259536"/>
    <lineage>
        <taxon>Bacteria</taxon>
        <taxon>Pseudomonadati</taxon>
        <taxon>Pseudomonadota</taxon>
        <taxon>Gammaproteobacteria</taxon>
        <taxon>Moraxellales</taxon>
        <taxon>Moraxellaceae</taxon>
        <taxon>Psychrobacter</taxon>
    </lineage>
</organism>
<proteinExistence type="inferred from homology"/>
<protein>
    <recommendedName>
        <fullName evidence="1">Zinc import ATP-binding protein ZnuC</fullName>
        <ecNumber evidence="1">7.2.2.20</ecNumber>
    </recommendedName>
</protein>
<keyword id="KW-0067">ATP-binding</keyword>
<keyword id="KW-0997">Cell inner membrane</keyword>
<keyword id="KW-1003">Cell membrane</keyword>
<keyword id="KW-0406">Ion transport</keyword>
<keyword id="KW-0472">Membrane</keyword>
<keyword id="KW-0547">Nucleotide-binding</keyword>
<keyword id="KW-1185">Reference proteome</keyword>
<keyword id="KW-1278">Translocase</keyword>
<keyword id="KW-0813">Transport</keyword>
<keyword id="KW-0862">Zinc</keyword>
<keyword id="KW-0864">Zinc transport</keyword>
<accession>Q4FQ27</accession>
<sequence>MNNTSKLLNLSNVSYYIGQQRLLSHINIDIAVNETISVIGPNGAGKSTLVKLILGLIEPTSGQVTPSAPLQIGYVPQRFSVPPILPLRVSDLLAQAHKKRLMAEQRQFIFDKLSLTHLLSRQMLHLSGGETQRVLLARALLDKPNLLILDEPMQGLDPETEVWLYQFIDELPEFLRCAMLVVSHDLHWVMKGSRRVICLNKHICCEGQPSELAISSEFQKLFGHHYEQPYVHQPHACEHHAPS</sequence>
<gene>
    <name evidence="1" type="primary">znuC</name>
    <name type="ordered locus">Psyc_2034</name>
</gene>
<reference key="1">
    <citation type="journal article" date="2010" name="Appl. Environ. Microbiol.">
        <title>The genome sequence of Psychrobacter arcticus 273-4, a psychroactive Siberian permafrost bacterium, reveals mechanisms for adaptation to low-temperature growth.</title>
        <authorList>
            <person name="Ayala-del-Rio H.L."/>
            <person name="Chain P.S."/>
            <person name="Grzymski J.J."/>
            <person name="Ponder M.A."/>
            <person name="Ivanova N."/>
            <person name="Bergholz P.W."/>
            <person name="Di Bartolo G."/>
            <person name="Hauser L."/>
            <person name="Land M."/>
            <person name="Bakermans C."/>
            <person name="Rodrigues D."/>
            <person name="Klappenbach J."/>
            <person name="Zarka D."/>
            <person name="Larimer F."/>
            <person name="Richardson P."/>
            <person name="Murray A."/>
            <person name="Thomashow M."/>
            <person name="Tiedje J.M."/>
        </authorList>
    </citation>
    <scope>NUCLEOTIDE SEQUENCE [LARGE SCALE GENOMIC DNA]</scope>
    <source>
        <strain>DSM 17307 / VKM B-2377 / 273-4</strain>
    </source>
</reference>
<evidence type="ECO:0000255" key="1">
    <source>
        <dbReference type="HAMAP-Rule" id="MF_01725"/>
    </source>
</evidence>